<evidence type="ECO:0000255" key="1">
    <source>
        <dbReference type="HAMAP-Rule" id="MF_01151"/>
    </source>
</evidence>
<evidence type="ECO:0000256" key="2">
    <source>
        <dbReference type="SAM" id="MobiDB-lite"/>
    </source>
</evidence>
<proteinExistence type="inferred from homology"/>
<accession>Q63R45</accession>
<dbReference type="EMBL" id="BX571965">
    <property type="protein sequence ID" value="CAH36839.1"/>
    <property type="molecule type" value="Genomic_DNA"/>
</dbReference>
<dbReference type="RefSeq" id="WP_004194243.1">
    <property type="nucleotide sequence ID" value="NZ_CP009538.1"/>
</dbReference>
<dbReference type="RefSeq" id="YP_109423.1">
    <property type="nucleotide sequence ID" value="NC_006350.1"/>
</dbReference>
<dbReference type="SMR" id="Q63R45"/>
<dbReference type="STRING" id="272560.BPSL2829"/>
<dbReference type="GeneID" id="93061417"/>
<dbReference type="KEGG" id="bps:BPSL2829"/>
<dbReference type="PATRIC" id="fig|272560.51.peg.2474"/>
<dbReference type="eggNOG" id="COG0576">
    <property type="taxonomic scope" value="Bacteria"/>
</dbReference>
<dbReference type="Proteomes" id="UP000000605">
    <property type="component" value="Chromosome 1"/>
</dbReference>
<dbReference type="GO" id="GO:0005829">
    <property type="term" value="C:cytosol"/>
    <property type="evidence" value="ECO:0007669"/>
    <property type="project" value="TreeGrafter"/>
</dbReference>
<dbReference type="GO" id="GO:0000774">
    <property type="term" value="F:adenyl-nucleotide exchange factor activity"/>
    <property type="evidence" value="ECO:0007669"/>
    <property type="project" value="InterPro"/>
</dbReference>
<dbReference type="GO" id="GO:0042803">
    <property type="term" value="F:protein homodimerization activity"/>
    <property type="evidence" value="ECO:0007669"/>
    <property type="project" value="InterPro"/>
</dbReference>
<dbReference type="GO" id="GO:0051087">
    <property type="term" value="F:protein-folding chaperone binding"/>
    <property type="evidence" value="ECO:0007669"/>
    <property type="project" value="InterPro"/>
</dbReference>
<dbReference type="GO" id="GO:0051082">
    <property type="term" value="F:unfolded protein binding"/>
    <property type="evidence" value="ECO:0007669"/>
    <property type="project" value="TreeGrafter"/>
</dbReference>
<dbReference type="GO" id="GO:0006457">
    <property type="term" value="P:protein folding"/>
    <property type="evidence" value="ECO:0007669"/>
    <property type="project" value="InterPro"/>
</dbReference>
<dbReference type="CDD" id="cd00446">
    <property type="entry name" value="GrpE"/>
    <property type="match status" value="1"/>
</dbReference>
<dbReference type="FunFam" id="2.30.22.10:FF:000001">
    <property type="entry name" value="Protein GrpE"/>
    <property type="match status" value="1"/>
</dbReference>
<dbReference type="Gene3D" id="3.90.20.20">
    <property type="match status" value="1"/>
</dbReference>
<dbReference type="Gene3D" id="2.30.22.10">
    <property type="entry name" value="Head domain of nucleotide exchange factor GrpE"/>
    <property type="match status" value="1"/>
</dbReference>
<dbReference type="HAMAP" id="MF_01151">
    <property type="entry name" value="GrpE"/>
    <property type="match status" value="1"/>
</dbReference>
<dbReference type="InterPro" id="IPR000740">
    <property type="entry name" value="GrpE"/>
</dbReference>
<dbReference type="InterPro" id="IPR013805">
    <property type="entry name" value="GrpE_coiled_coil"/>
</dbReference>
<dbReference type="InterPro" id="IPR009012">
    <property type="entry name" value="GrpE_head"/>
</dbReference>
<dbReference type="NCBIfam" id="NF010737">
    <property type="entry name" value="PRK14139.1"/>
    <property type="match status" value="1"/>
</dbReference>
<dbReference type="NCBIfam" id="NF010738">
    <property type="entry name" value="PRK14140.1"/>
    <property type="match status" value="1"/>
</dbReference>
<dbReference type="NCBIfam" id="NF010748">
    <property type="entry name" value="PRK14150.1"/>
    <property type="match status" value="1"/>
</dbReference>
<dbReference type="PANTHER" id="PTHR21237">
    <property type="entry name" value="GRPE PROTEIN"/>
    <property type="match status" value="1"/>
</dbReference>
<dbReference type="PANTHER" id="PTHR21237:SF23">
    <property type="entry name" value="GRPE PROTEIN HOMOLOG, MITOCHONDRIAL"/>
    <property type="match status" value="1"/>
</dbReference>
<dbReference type="Pfam" id="PF01025">
    <property type="entry name" value="GrpE"/>
    <property type="match status" value="1"/>
</dbReference>
<dbReference type="PRINTS" id="PR00773">
    <property type="entry name" value="GRPEPROTEIN"/>
</dbReference>
<dbReference type="SUPFAM" id="SSF58014">
    <property type="entry name" value="Coiled-coil domain of nucleotide exchange factor GrpE"/>
    <property type="match status" value="1"/>
</dbReference>
<dbReference type="SUPFAM" id="SSF51064">
    <property type="entry name" value="Head domain of nucleotide exchange factor GrpE"/>
    <property type="match status" value="1"/>
</dbReference>
<dbReference type="PROSITE" id="PS01071">
    <property type="entry name" value="GRPE"/>
    <property type="match status" value="1"/>
</dbReference>
<gene>
    <name evidence="1" type="primary">grpE</name>
    <name type="ordered locus">BPSL2829</name>
</gene>
<comment type="function">
    <text evidence="1">Participates actively in the response to hyperosmotic and heat shock by preventing the aggregation of stress-denatured proteins, in association with DnaK and GrpE. It is the nucleotide exchange factor for DnaK and may function as a thermosensor. Unfolded proteins bind initially to DnaJ; upon interaction with the DnaJ-bound protein, DnaK hydrolyzes its bound ATP, resulting in the formation of a stable complex. GrpE releases ADP from DnaK; ATP binding to DnaK triggers the release of the substrate protein, thus completing the reaction cycle. Several rounds of ATP-dependent interactions between DnaJ, DnaK and GrpE are required for fully efficient folding.</text>
</comment>
<comment type="subunit">
    <text evidence="1">Homodimer.</text>
</comment>
<comment type="subcellular location">
    <subcellularLocation>
        <location evidence="1">Cytoplasm</location>
    </subcellularLocation>
</comment>
<comment type="similarity">
    <text evidence="1">Belongs to the GrpE family.</text>
</comment>
<feature type="chain" id="PRO_1000053559" description="Protein GrpE">
    <location>
        <begin position="1"/>
        <end position="185"/>
    </location>
</feature>
<feature type="region of interest" description="Disordered" evidence="2">
    <location>
        <begin position="1"/>
        <end position="38"/>
    </location>
</feature>
<feature type="compositionally biased region" description="Polar residues" evidence="2">
    <location>
        <begin position="1"/>
        <end position="11"/>
    </location>
</feature>
<feature type="compositionally biased region" description="Low complexity" evidence="2">
    <location>
        <begin position="19"/>
        <end position="38"/>
    </location>
</feature>
<organism>
    <name type="scientific">Burkholderia pseudomallei (strain K96243)</name>
    <dbReference type="NCBI Taxonomy" id="272560"/>
    <lineage>
        <taxon>Bacteria</taxon>
        <taxon>Pseudomonadati</taxon>
        <taxon>Pseudomonadota</taxon>
        <taxon>Betaproteobacteria</taxon>
        <taxon>Burkholderiales</taxon>
        <taxon>Burkholderiaceae</taxon>
        <taxon>Burkholderia</taxon>
        <taxon>pseudomallei group</taxon>
    </lineage>
</organism>
<sequence length="185" mass="19741">MENTQENPTDQTTEETGREAQAAEPAAQAAENAAPAAEAALAEAQAKIAELQESFLRAKAETENVRRRAQDDVAKAHKFAIEGFAENLLPVLDSLEAAVGDTSGDLAKVREGVELTLRQLTSALEKGRVAALNPVGEKFDPHLHQAISMVPADQEPNTVVAVLQKGYTIADRVLRPALVTVAQPK</sequence>
<protein>
    <recommendedName>
        <fullName evidence="1">Protein GrpE</fullName>
    </recommendedName>
    <alternativeName>
        <fullName evidence="1">HSP-70 cofactor</fullName>
    </alternativeName>
</protein>
<name>GRPE_BURPS</name>
<keyword id="KW-0143">Chaperone</keyword>
<keyword id="KW-0963">Cytoplasm</keyword>
<keyword id="KW-1185">Reference proteome</keyword>
<keyword id="KW-0346">Stress response</keyword>
<reference key="1">
    <citation type="journal article" date="2004" name="Proc. Natl. Acad. Sci. U.S.A.">
        <title>Genomic plasticity of the causative agent of melioidosis, Burkholderia pseudomallei.</title>
        <authorList>
            <person name="Holden M.T.G."/>
            <person name="Titball R.W."/>
            <person name="Peacock S.J."/>
            <person name="Cerdeno-Tarraga A.-M."/>
            <person name="Atkins T."/>
            <person name="Crossman L.C."/>
            <person name="Pitt T."/>
            <person name="Churcher C."/>
            <person name="Mungall K.L."/>
            <person name="Bentley S.D."/>
            <person name="Sebaihia M."/>
            <person name="Thomson N.R."/>
            <person name="Bason N."/>
            <person name="Beacham I.R."/>
            <person name="Brooks K."/>
            <person name="Brown K.A."/>
            <person name="Brown N.F."/>
            <person name="Challis G.L."/>
            <person name="Cherevach I."/>
            <person name="Chillingworth T."/>
            <person name="Cronin A."/>
            <person name="Crossett B."/>
            <person name="Davis P."/>
            <person name="DeShazer D."/>
            <person name="Feltwell T."/>
            <person name="Fraser A."/>
            <person name="Hance Z."/>
            <person name="Hauser H."/>
            <person name="Holroyd S."/>
            <person name="Jagels K."/>
            <person name="Keith K.E."/>
            <person name="Maddison M."/>
            <person name="Moule S."/>
            <person name="Price C."/>
            <person name="Quail M.A."/>
            <person name="Rabbinowitsch E."/>
            <person name="Rutherford K."/>
            <person name="Sanders M."/>
            <person name="Simmonds M."/>
            <person name="Songsivilai S."/>
            <person name="Stevens K."/>
            <person name="Tumapa S."/>
            <person name="Vesaratchavest M."/>
            <person name="Whitehead S."/>
            <person name="Yeats C."/>
            <person name="Barrell B.G."/>
            <person name="Oyston P.C.F."/>
            <person name="Parkhill J."/>
        </authorList>
    </citation>
    <scope>NUCLEOTIDE SEQUENCE [LARGE SCALE GENOMIC DNA]</scope>
    <source>
        <strain>K96243</strain>
    </source>
</reference>